<evidence type="ECO:0000250" key="1">
    <source>
        <dbReference type="UniProtKB" id="Q9VKI3"/>
    </source>
</evidence>
<evidence type="ECO:0000255" key="2"/>
<evidence type="ECO:0000255" key="3">
    <source>
        <dbReference type="PROSITE-ProRule" id="PRU00483"/>
    </source>
</evidence>
<evidence type="ECO:0000305" key="4"/>
<evidence type="ECO:0000312" key="5">
    <source>
        <dbReference type="EMBL" id="EDW29130.1"/>
    </source>
</evidence>
<proteinExistence type="inferred from homology"/>
<sequence length="122" mass="12694">MKTVAFLAVVVLFAAFACASCSSSYAAPAPAAAPASSYSSVPAPPCPKNYLFSCQPNLVPAPCAQQAAPAAYGSAGAYTEQVPSYIGFAPYQQLQQYHQRIGNAALIDELRSLGQGIQGQQY</sequence>
<name>VTU4_DROPE</name>
<organism>
    <name type="scientific">Drosophila persimilis</name>
    <name type="common">Fruit fly</name>
    <dbReference type="NCBI Taxonomy" id="7234"/>
    <lineage>
        <taxon>Eukaryota</taxon>
        <taxon>Metazoa</taxon>
        <taxon>Ecdysozoa</taxon>
        <taxon>Arthropoda</taxon>
        <taxon>Hexapoda</taxon>
        <taxon>Insecta</taxon>
        <taxon>Pterygota</taxon>
        <taxon>Neoptera</taxon>
        <taxon>Endopterygota</taxon>
        <taxon>Diptera</taxon>
        <taxon>Brachycera</taxon>
        <taxon>Muscomorpha</taxon>
        <taxon>Ephydroidea</taxon>
        <taxon>Drosophilidae</taxon>
        <taxon>Drosophila</taxon>
        <taxon>Sophophora</taxon>
    </lineage>
</organism>
<feature type="signal peptide" evidence="2">
    <location>
        <begin position="1"/>
        <end position="19"/>
    </location>
</feature>
<feature type="chain" id="PRO_0000398797" description="Vitelline membrane protein Vm32E" evidence="2">
    <location>
        <begin position="20"/>
        <end position="122"/>
    </location>
</feature>
<feature type="domain" description="VM" evidence="3">
    <location>
        <begin position="40"/>
        <end position="79"/>
    </location>
</feature>
<reference evidence="5" key="1">
    <citation type="journal article" date="2007" name="Nature">
        <title>Evolution of genes and genomes on the Drosophila phylogeny.</title>
        <authorList>
            <consortium name="Drosophila 12 genomes consortium"/>
        </authorList>
    </citation>
    <scope>NUCLEOTIDE SEQUENCE [LARGE SCALE GENOMIC DNA]</scope>
    <source>
        <strain evidence="5">MSH-3 / Tucson 14011-0111.49</strain>
    </source>
</reference>
<protein>
    <recommendedName>
        <fullName evidence="1">Vitelline membrane protein Vm32E</fullName>
    </recommendedName>
</protein>
<dbReference type="EMBL" id="CH479180">
    <property type="protein sequence ID" value="EDW29130.1"/>
    <property type="molecule type" value="Genomic_DNA"/>
</dbReference>
<dbReference type="STRING" id="7234.B4G9V0"/>
<dbReference type="EnsemblMetazoa" id="FBtr0184194">
    <property type="protein sequence ID" value="FBpp0182686"/>
    <property type="gene ID" value="FBgn0156180"/>
</dbReference>
<dbReference type="EnsemblMetazoa" id="XM_002015098.2">
    <property type="protein sequence ID" value="XP_002015134.1"/>
    <property type="gene ID" value="LOC6589730"/>
</dbReference>
<dbReference type="GeneID" id="6589730"/>
<dbReference type="KEGG" id="dpe:6589730"/>
<dbReference type="CTD" id="34558"/>
<dbReference type="HOGENOM" id="CLU_169196_0_0_1"/>
<dbReference type="OMA" id="CAQEAQA"/>
<dbReference type="OrthoDB" id="8062718at2759"/>
<dbReference type="PhylomeDB" id="B4G9V0"/>
<dbReference type="Proteomes" id="UP000008744">
    <property type="component" value="Unassembled WGS sequence"/>
</dbReference>
<dbReference type="GO" id="GO:0042600">
    <property type="term" value="C:egg chorion"/>
    <property type="evidence" value="ECO:0007669"/>
    <property type="project" value="EnsemblMetazoa"/>
</dbReference>
<dbReference type="GO" id="GO:0005615">
    <property type="term" value="C:extracellular space"/>
    <property type="evidence" value="ECO:0000250"/>
    <property type="project" value="UniProtKB"/>
</dbReference>
<dbReference type="GO" id="GO:0060388">
    <property type="term" value="C:vitelline envelope"/>
    <property type="evidence" value="ECO:0007669"/>
    <property type="project" value="EnsemblMetazoa"/>
</dbReference>
<dbReference type="GO" id="GO:0008316">
    <property type="term" value="F:structural constituent of vitelline membrane"/>
    <property type="evidence" value="ECO:0000250"/>
    <property type="project" value="UniProtKB"/>
</dbReference>
<dbReference type="GO" id="GO:0007305">
    <property type="term" value="P:vitelline membrane formation involved in chorion-containing eggshell formation"/>
    <property type="evidence" value="ECO:0000250"/>
    <property type="project" value="UniProtKB"/>
</dbReference>
<dbReference type="InterPro" id="IPR013135">
    <property type="entry name" value="Vitelline_membr_Cys-rich-dom"/>
</dbReference>
<dbReference type="Pfam" id="PF10542">
    <property type="entry name" value="Vitelline_membr"/>
    <property type="match status" value="1"/>
</dbReference>
<dbReference type="PROSITE" id="PS51137">
    <property type="entry name" value="VM"/>
    <property type="match status" value="1"/>
</dbReference>
<gene>
    <name evidence="1" type="primary">Vm32E</name>
    <name type="ORF">GL18579</name>
</gene>
<keyword id="KW-1185">Reference proteome</keyword>
<keyword id="KW-0964">Secreted</keyword>
<keyword id="KW-0732">Signal</keyword>
<accession>B4G9V0</accession>
<comment type="function">
    <text evidence="1">Major early eggshell protein.</text>
</comment>
<comment type="subcellular location">
    <subcellularLocation>
        <location evidence="1">Secreted</location>
    </subcellularLocation>
</comment>
<comment type="similarity">
    <text evidence="4">Belongs to the vitelline membrane family.</text>
</comment>